<feature type="chain" id="PRO_0000214521" description="Cell division protein ZipA">
    <location>
        <begin position="1"/>
        <end position="328"/>
    </location>
</feature>
<feature type="topological domain" description="Periplasmic" evidence="1 12">
    <location>
        <begin position="1"/>
        <end position="6"/>
    </location>
</feature>
<feature type="transmembrane region" description="Helical" evidence="1">
    <location>
        <begin position="7"/>
        <end position="27"/>
    </location>
</feature>
<feature type="topological domain" description="Cytoplasmic" evidence="1 12">
    <location>
        <begin position="28"/>
        <end position="328"/>
    </location>
</feature>
<feature type="region of interest" description="Disordered" evidence="2">
    <location>
        <begin position="42"/>
        <end position="186"/>
    </location>
</feature>
<feature type="compositionally biased region" description="Acidic residues" evidence="2">
    <location>
        <begin position="51"/>
        <end position="63"/>
    </location>
</feature>
<feature type="compositionally biased region" description="Low complexity" evidence="2">
    <location>
        <begin position="97"/>
        <end position="115"/>
    </location>
</feature>
<feature type="compositionally biased region" description="Low complexity" evidence="2">
    <location>
        <begin position="123"/>
        <end position="171"/>
    </location>
</feature>
<feature type="sequence conflict" description="In Ref. 1; AAB42061." evidence="15" ref="1">
    <original>L</original>
    <variation>A</variation>
    <location>
        <position position="211"/>
    </location>
</feature>
<feature type="strand" evidence="27">
    <location>
        <begin position="193"/>
        <end position="200"/>
    </location>
</feature>
<feature type="helix" evidence="27">
    <location>
        <begin position="209"/>
        <end position="218"/>
    </location>
</feature>
<feature type="strand" evidence="27">
    <location>
        <begin position="221"/>
        <end position="223"/>
    </location>
</feature>
<feature type="helix" evidence="27">
    <location>
        <begin position="225"/>
        <end position="227"/>
    </location>
</feature>
<feature type="strand" evidence="27">
    <location>
        <begin position="228"/>
        <end position="234"/>
    </location>
</feature>
<feature type="strand" evidence="27">
    <location>
        <begin position="241"/>
        <end position="249"/>
    </location>
</feature>
<feature type="turn" evidence="28">
    <location>
        <begin position="256"/>
        <end position="259"/>
    </location>
</feature>
<feature type="strand" evidence="27">
    <location>
        <begin position="262"/>
        <end position="272"/>
    </location>
</feature>
<feature type="strand" evidence="27">
    <location>
        <begin position="274"/>
        <end position="276"/>
    </location>
</feature>
<feature type="helix" evidence="27">
    <location>
        <begin position="278"/>
        <end position="296"/>
    </location>
</feature>
<feature type="strand" evidence="27">
    <location>
        <begin position="299"/>
        <end position="301"/>
    </location>
</feature>
<feature type="strand" evidence="29">
    <location>
        <begin position="305"/>
        <end position="307"/>
    </location>
</feature>
<feature type="helix" evidence="27">
    <location>
        <begin position="310"/>
        <end position="326"/>
    </location>
</feature>
<sequence length="328" mass="36475">MMQDLRLILIIVGAIAIIALLVHGFWTSRKERSSMFRDRPLKRMKSKRDDDSYDEDVEDDEGVGEVRVHRVNHAPANAQEHEAARPSPQHQYQPPYASAQPRQPVQQPPEAQVPPQHAPHPAQPVQQPAYQPQPEQPLQQPVSPQVAPAPQPVHSAPQPAQQAFQPAEPVAAPQPEPVAEPAPVMDKPKRKEAVIIMNVAAHHGSELNGELLLNSIQQAGFIFGDMNIYHRHLSPDGSGPALFSLANMVKPGTFDPEMKDFTTPGVTIFMQVPSYGDELQNFKLMLQSAQHIADEVGGVVLDDQRRMMTPQKLREYQDIIREVKDANA</sequence>
<gene>
    <name evidence="1 14" type="primary">zipA</name>
    <name type="ordered locus">b2412</name>
    <name type="ordered locus">JW2404</name>
</gene>
<keyword id="KW-0002">3D-structure</keyword>
<keyword id="KW-0131">Cell cycle</keyword>
<keyword id="KW-0132">Cell division</keyword>
<keyword id="KW-0997">Cell inner membrane</keyword>
<keyword id="KW-1003">Cell membrane</keyword>
<keyword id="KW-0472">Membrane</keyword>
<keyword id="KW-1185">Reference proteome</keyword>
<keyword id="KW-0812">Transmembrane</keyword>
<keyword id="KW-1133">Transmembrane helix</keyword>
<proteinExistence type="evidence at protein level"/>
<dbReference type="EMBL" id="U74650">
    <property type="protein sequence ID" value="AAB42061.1"/>
    <property type="molecule type" value="Genomic_DNA"/>
</dbReference>
<dbReference type="EMBL" id="U00096">
    <property type="protein sequence ID" value="AAC75465.1"/>
    <property type="molecule type" value="Genomic_DNA"/>
</dbReference>
<dbReference type="EMBL" id="AP009048">
    <property type="protein sequence ID" value="BAA16284.1"/>
    <property type="molecule type" value="Genomic_DNA"/>
</dbReference>
<dbReference type="PIR" id="C65015">
    <property type="entry name" value="C65015"/>
</dbReference>
<dbReference type="RefSeq" id="NP_416907.1">
    <property type="nucleotide sequence ID" value="NC_000913.3"/>
</dbReference>
<dbReference type="RefSeq" id="WP_001300494.1">
    <property type="nucleotide sequence ID" value="NZ_LN832404.1"/>
</dbReference>
<dbReference type="PDB" id="1F46">
    <property type="method" value="X-ray"/>
    <property type="resolution" value="1.50 A"/>
    <property type="chains" value="A/B=189-328"/>
</dbReference>
<dbReference type="PDB" id="1F47">
    <property type="method" value="X-ray"/>
    <property type="resolution" value="1.95 A"/>
    <property type="chains" value="B=185-328"/>
</dbReference>
<dbReference type="PDB" id="1F7W">
    <property type="method" value="NMR"/>
    <property type="chains" value="A=185-328"/>
</dbReference>
<dbReference type="PDB" id="1F7X">
    <property type="method" value="NMR"/>
    <property type="chains" value="A=185-328"/>
</dbReference>
<dbReference type="PDB" id="1S1J">
    <property type="method" value="X-ray"/>
    <property type="resolution" value="2.18 A"/>
    <property type="chains" value="A/B=185-328"/>
</dbReference>
<dbReference type="PDB" id="1S1S">
    <property type="method" value="X-ray"/>
    <property type="resolution" value="2.10 A"/>
    <property type="chains" value="A/B=185-328"/>
</dbReference>
<dbReference type="PDB" id="1Y2F">
    <property type="method" value="X-ray"/>
    <property type="resolution" value="2.00 A"/>
    <property type="chains" value="A=190-328"/>
</dbReference>
<dbReference type="PDB" id="1Y2G">
    <property type="method" value="X-ray"/>
    <property type="resolution" value="1.90 A"/>
    <property type="chains" value="A/B=189-328"/>
</dbReference>
<dbReference type="PDBsum" id="1F46"/>
<dbReference type="PDBsum" id="1F47"/>
<dbReference type="PDBsum" id="1F7W"/>
<dbReference type="PDBsum" id="1F7X"/>
<dbReference type="PDBsum" id="1S1J"/>
<dbReference type="PDBsum" id="1S1S"/>
<dbReference type="PDBsum" id="1Y2F"/>
<dbReference type="PDBsum" id="1Y2G"/>
<dbReference type="SMR" id="P77173"/>
<dbReference type="BioGRID" id="4261708">
    <property type="interactions" value="561"/>
</dbReference>
<dbReference type="BioGRID" id="851209">
    <property type="interactions" value="1"/>
</dbReference>
<dbReference type="ComplexPortal" id="CPX-1936">
    <property type="entry name" value="Divisome complex"/>
</dbReference>
<dbReference type="DIP" id="DIP-1157N"/>
<dbReference type="FunCoup" id="P77173">
    <property type="interactions" value="98"/>
</dbReference>
<dbReference type="IntAct" id="P77173">
    <property type="interactions" value="2"/>
</dbReference>
<dbReference type="STRING" id="511145.b2412"/>
<dbReference type="BindingDB" id="P77173"/>
<dbReference type="ChEMBL" id="CHEMBL3954"/>
<dbReference type="DrugBank" id="DB02191">
    <property type="generic name" value="(7as,12ar,12bs)-1,2,3,4,7a,12,12a,12b-Octahydroindolo[2,3-a]Quinolizin-7(6h)-One"/>
</dbReference>
<dbReference type="DrugBank" id="DB03916">
    <property type="generic name" value="4-{2-[4-(2-Aminoethyl)Piperazin-1-Yl]Pyridin-4-Yl}-N-(3-Chloro-4-Methylphenyl)Pyrimidin-2-Amine"/>
</dbReference>
<dbReference type="DrugBank" id="DB04154">
    <property type="generic name" value="N-Methyl-N-[3-(6-Phenyl[1,2,4]Triazolo[4,3-B]Pyridazin-3-Yl)Phenyl]Acetamide"/>
</dbReference>
<dbReference type="DrugBank" id="DB01967">
    <property type="generic name" value="N-{3-[(7ar,12as,12bs)-7-Oxo-1,3,4,6,7,7a,12a,12b-Octahydroindolo[2,3-a]Quinolizin-12(2h)-Yl]Propyl}Propane-2-Sulfonamide"/>
</dbReference>
<dbReference type="jPOST" id="P77173"/>
<dbReference type="PaxDb" id="511145-b2412"/>
<dbReference type="EnsemblBacteria" id="AAC75465">
    <property type="protein sequence ID" value="AAC75465"/>
    <property type="gene ID" value="b2412"/>
</dbReference>
<dbReference type="GeneID" id="946869"/>
<dbReference type="KEGG" id="ecj:JW2404"/>
<dbReference type="KEGG" id="eco:b2412"/>
<dbReference type="KEGG" id="ecoc:C3026_13410"/>
<dbReference type="PATRIC" id="fig|511145.12.peg.2506"/>
<dbReference type="EchoBASE" id="EB3921"/>
<dbReference type="eggNOG" id="COG3115">
    <property type="taxonomic scope" value="Bacteria"/>
</dbReference>
<dbReference type="HOGENOM" id="CLU_030174_1_0_6"/>
<dbReference type="InParanoid" id="P77173"/>
<dbReference type="OMA" id="FWSIRKQ"/>
<dbReference type="OrthoDB" id="7054914at2"/>
<dbReference type="PhylomeDB" id="P77173"/>
<dbReference type="BioCyc" id="EcoCyc:G7258-MONOMER"/>
<dbReference type="EvolutionaryTrace" id="P77173"/>
<dbReference type="PRO" id="PR:P77173"/>
<dbReference type="Proteomes" id="UP000000625">
    <property type="component" value="Chromosome"/>
</dbReference>
<dbReference type="GO" id="GO:0032153">
    <property type="term" value="C:cell division site"/>
    <property type="evidence" value="ECO:0000314"/>
    <property type="project" value="EcoliWiki"/>
</dbReference>
<dbReference type="GO" id="GO:1990586">
    <property type="term" value="C:divisome complex"/>
    <property type="evidence" value="ECO:0000303"/>
    <property type="project" value="ComplexPortal"/>
</dbReference>
<dbReference type="GO" id="GO:0005886">
    <property type="term" value="C:plasma membrane"/>
    <property type="evidence" value="ECO:0000314"/>
    <property type="project" value="EcoCyc"/>
</dbReference>
<dbReference type="GO" id="GO:0042803">
    <property type="term" value="F:protein homodimerization activity"/>
    <property type="evidence" value="ECO:0000314"/>
    <property type="project" value="EcoCyc"/>
</dbReference>
<dbReference type="GO" id="GO:0051301">
    <property type="term" value="P:cell division"/>
    <property type="evidence" value="ECO:0000303"/>
    <property type="project" value="ComplexPortal"/>
</dbReference>
<dbReference type="GO" id="GO:0000917">
    <property type="term" value="P:division septum assembly"/>
    <property type="evidence" value="ECO:0000315"/>
    <property type="project" value="EcoliWiki"/>
</dbReference>
<dbReference type="GO" id="GO:0043093">
    <property type="term" value="P:FtsZ-dependent cytokinesis"/>
    <property type="evidence" value="ECO:0000303"/>
    <property type="project" value="ComplexPortal"/>
</dbReference>
<dbReference type="CDD" id="cd00231">
    <property type="entry name" value="ZipA"/>
    <property type="match status" value="1"/>
</dbReference>
<dbReference type="DisProt" id="DP00161"/>
<dbReference type="FunFam" id="3.30.1400.10:FF:000001">
    <property type="entry name" value="Cell division protein ZipA"/>
    <property type="match status" value="1"/>
</dbReference>
<dbReference type="Gene3D" id="3.30.1400.10">
    <property type="entry name" value="ZipA, C-terminal FtsZ-binding domain"/>
    <property type="match status" value="1"/>
</dbReference>
<dbReference type="HAMAP" id="MF_00509">
    <property type="entry name" value="ZipA"/>
    <property type="match status" value="1"/>
</dbReference>
<dbReference type="InterPro" id="IPR011919">
    <property type="entry name" value="Cell_div_ZipA"/>
</dbReference>
<dbReference type="InterPro" id="IPR007449">
    <property type="entry name" value="ZipA_FtsZ-bd_C"/>
</dbReference>
<dbReference type="InterPro" id="IPR036765">
    <property type="entry name" value="ZipA_FtsZ-bd_C_sf"/>
</dbReference>
<dbReference type="NCBIfam" id="TIGR02205">
    <property type="entry name" value="septum_zipA"/>
    <property type="match status" value="1"/>
</dbReference>
<dbReference type="PANTHER" id="PTHR38685">
    <property type="entry name" value="CELL DIVISION PROTEIN ZIPA"/>
    <property type="match status" value="1"/>
</dbReference>
<dbReference type="PANTHER" id="PTHR38685:SF1">
    <property type="entry name" value="CELL DIVISION PROTEIN ZIPA"/>
    <property type="match status" value="1"/>
</dbReference>
<dbReference type="Pfam" id="PF04354">
    <property type="entry name" value="ZipA_C"/>
    <property type="match status" value="1"/>
</dbReference>
<dbReference type="SMART" id="SM00771">
    <property type="entry name" value="ZipA_C"/>
    <property type="match status" value="1"/>
</dbReference>
<dbReference type="SUPFAM" id="SSF64383">
    <property type="entry name" value="Cell-division protein ZipA, C-terminal domain"/>
    <property type="match status" value="1"/>
</dbReference>
<organism>
    <name type="scientific">Escherichia coli (strain K12)</name>
    <dbReference type="NCBI Taxonomy" id="83333"/>
    <lineage>
        <taxon>Bacteria</taxon>
        <taxon>Pseudomonadati</taxon>
        <taxon>Pseudomonadota</taxon>
        <taxon>Gammaproteobacteria</taxon>
        <taxon>Enterobacterales</taxon>
        <taxon>Enterobacteriaceae</taxon>
        <taxon>Escherichia</taxon>
    </lineage>
</organism>
<protein>
    <recommendedName>
        <fullName evidence="1">Cell division protein ZipA</fullName>
    </recommendedName>
    <alternativeName>
        <fullName evidence="14">FtsZ interacting protein A</fullName>
    </alternativeName>
</protein>
<name>ZIPA_ECOLI</name>
<evidence type="ECO:0000255" key="1">
    <source>
        <dbReference type="HAMAP-Rule" id="MF_00509"/>
    </source>
</evidence>
<evidence type="ECO:0000256" key="2">
    <source>
        <dbReference type="SAM" id="MobiDB-lite"/>
    </source>
</evidence>
<evidence type="ECO:0000269" key="3">
    <source>
    </source>
</evidence>
<evidence type="ECO:0000269" key="4">
    <source>
    </source>
</evidence>
<evidence type="ECO:0000269" key="5">
    <source>
    </source>
</evidence>
<evidence type="ECO:0000269" key="6">
    <source>
    </source>
</evidence>
<evidence type="ECO:0000269" key="7">
    <source>
    </source>
</evidence>
<evidence type="ECO:0000269" key="8">
    <source>
    </source>
</evidence>
<evidence type="ECO:0000269" key="9">
    <source>
    </source>
</evidence>
<evidence type="ECO:0000269" key="10">
    <source>
    </source>
</evidence>
<evidence type="ECO:0000269" key="11">
    <source>
    </source>
</evidence>
<evidence type="ECO:0000269" key="12">
    <source>
    </source>
</evidence>
<evidence type="ECO:0000269" key="13">
    <source>
    </source>
</evidence>
<evidence type="ECO:0000303" key="14">
    <source>
    </source>
</evidence>
<evidence type="ECO:0000305" key="15"/>
<evidence type="ECO:0000305" key="16">
    <source>
    </source>
</evidence>
<evidence type="ECO:0000305" key="17">
    <source>
    </source>
</evidence>
<evidence type="ECO:0000305" key="18">
    <source>
    </source>
</evidence>
<evidence type="ECO:0007744" key="19">
    <source>
        <dbReference type="PDB" id="1F46"/>
    </source>
</evidence>
<evidence type="ECO:0007744" key="20">
    <source>
        <dbReference type="PDB" id="1F47"/>
    </source>
</evidence>
<evidence type="ECO:0007744" key="21">
    <source>
        <dbReference type="PDB" id="1F7W"/>
    </source>
</evidence>
<evidence type="ECO:0007744" key="22">
    <source>
        <dbReference type="PDB" id="1F7X"/>
    </source>
</evidence>
<evidence type="ECO:0007744" key="23">
    <source>
        <dbReference type="PDB" id="1S1J"/>
    </source>
</evidence>
<evidence type="ECO:0007744" key="24">
    <source>
        <dbReference type="PDB" id="1S1S"/>
    </source>
</evidence>
<evidence type="ECO:0007744" key="25">
    <source>
        <dbReference type="PDB" id="1Y2F"/>
    </source>
</evidence>
<evidence type="ECO:0007744" key="26">
    <source>
        <dbReference type="PDB" id="1Y2G"/>
    </source>
</evidence>
<evidence type="ECO:0007829" key="27">
    <source>
        <dbReference type="PDB" id="1F46"/>
    </source>
</evidence>
<evidence type="ECO:0007829" key="28">
    <source>
        <dbReference type="PDB" id="1F7W"/>
    </source>
</evidence>
<evidence type="ECO:0007829" key="29">
    <source>
        <dbReference type="PDB" id="1S1S"/>
    </source>
</evidence>
<accession>P77173</accession>
<comment type="function">
    <text evidence="3 5 6 9 10 11 12">Essential cell division protein that stabilizes the FtsZ protofilaments by cross-linking them and that serves as a cytoplasmic membrane anchor for the Z ring (PubMed:11847116, PubMed:22164258, PubMed:22304478, PubMed:23233671, PubMed:9008158). Also required for the recruitment to the septal ring of the downstream cell division proteins FtsK, FtsQ, FtsL and FtsN (PubMed:11847116, PubMed:11948172). ZipA overproduction protects FtsZ from degradation by ClpP by preventing recognition by ClpX (PubMed:23233671). Does not affect the GTPase activity of FtsZ (PubMed:10209756).</text>
</comment>
<comment type="subunit">
    <text evidence="3 4 9 10 12">Interacts with FtsZ via their C-terminal domains (PubMed:10209756, PubMed:10880432, PubMed:22164258, PubMed:9008158). Can form homodimers prior to association with FtsZ (PubMed:22304478).</text>
</comment>
<comment type="interaction">
    <interactant intactId="EBI-1029213">
        <id>P77173</id>
    </interactant>
    <interactant intactId="EBI-370963">
        <id>P0A9A6</id>
        <label>ftsZ</label>
    </interactant>
    <organismsDiffer>false</organismsDiffer>
    <experiments>5</experiments>
</comment>
<comment type="subcellular location">
    <subcellularLocation>
        <location evidence="7 12">Cell inner membrane</location>
        <topology evidence="12">Single-pass type I membrane protein</topology>
    </subcellularLocation>
    <text evidence="3 12 13">Localizes to the Z ring in an FtsZ-dependent manner (PubMed:10209756, PubMed:9008158, PubMed:9864327). Localization does not depend upon FtsA or FtsI (PubMed:10209756, PubMed:9864327).</text>
</comment>
<comment type="induction">
    <text evidence="8">Repressed 1.5-fold by hydroxyurea.</text>
</comment>
<comment type="domain">
    <text evidence="16">Contains an N-terminal transmembrane domain, followed by a charged domain, an unstructured P/Q domain rich in proline and glutamine, and a C-terminal FtsZ-binding domain.</text>
</comment>
<comment type="miscellaneous">
    <text evidence="17 18">Has been isolated as a 91 kDa complex containing ZipA-EptA and an unidentified 24 kDa protein (PubMed:16079137), but it was shown later that there is no physical interaction between ZipA and EptA (PubMed:22304478).</text>
</comment>
<comment type="similarity">
    <text evidence="1 15">Belongs to the ZipA family.</text>
</comment>
<reference key="1">
    <citation type="journal article" date="1997" name="Cell">
        <title>Direct binding of FtsZ to ZipA, an essential component of the septal ring structure that mediates cell division in E. coli.</title>
        <authorList>
            <person name="Hale C.A."/>
            <person name="de Boer P.A.J."/>
        </authorList>
    </citation>
    <scope>NUCLEOTIDE SEQUENCE [GENOMIC DNA]</scope>
    <scope>FUNCTION</scope>
    <scope>INTERACTION WITH FTSZ</scope>
    <scope>SUBCELLULAR LOCATION</scope>
    <scope>TOPOLOGY</scope>
    <source>
        <strain>PB103</strain>
    </source>
</reference>
<reference key="2">
    <citation type="journal article" date="1997" name="DNA Res.">
        <title>Construction of a contiguous 874-kb sequence of the Escherichia coli-K12 genome corresponding to 50.0-68.8 min on the linkage map and analysis of its sequence features.</title>
        <authorList>
            <person name="Yamamoto Y."/>
            <person name="Aiba H."/>
            <person name="Baba T."/>
            <person name="Hayashi K."/>
            <person name="Inada T."/>
            <person name="Isono K."/>
            <person name="Itoh T."/>
            <person name="Kimura S."/>
            <person name="Kitagawa M."/>
            <person name="Makino K."/>
            <person name="Miki T."/>
            <person name="Mitsuhashi N."/>
            <person name="Mizobuchi K."/>
            <person name="Mori H."/>
            <person name="Nakade S."/>
            <person name="Nakamura Y."/>
            <person name="Nashimoto H."/>
            <person name="Oshima T."/>
            <person name="Oyama S."/>
            <person name="Saito N."/>
            <person name="Sampei G."/>
            <person name="Satoh Y."/>
            <person name="Sivasundaram S."/>
            <person name="Tagami H."/>
            <person name="Takahashi H."/>
            <person name="Takeda J."/>
            <person name="Takemoto K."/>
            <person name="Uehara K."/>
            <person name="Wada C."/>
            <person name="Yamagata S."/>
            <person name="Horiuchi T."/>
        </authorList>
    </citation>
    <scope>NUCLEOTIDE SEQUENCE [LARGE SCALE GENOMIC DNA]</scope>
    <source>
        <strain>K12 / W3110 / ATCC 27325 / DSM 5911</strain>
    </source>
</reference>
<reference key="3">
    <citation type="journal article" date="1997" name="Science">
        <title>The complete genome sequence of Escherichia coli K-12.</title>
        <authorList>
            <person name="Blattner F.R."/>
            <person name="Plunkett G. III"/>
            <person name="Bloch C.A."/>
            <person name="Perna N.T."/>
            <person name="Burland V."/>
            <person name="Riley M."/>
            <person name="Collado-Vides J."/>
            <person name="Glasner J.D."/>
            <person name="Rode C.K."/>
            <person name="Mayhew G.F."/>
            <person name="Gregor J."/>
            <person name="Davis N.W."/>
            <person name="Kirkpatrick H.A."/>
            <person name="Goeden M.A."/>
            <person name="Rose D.J."/>
            <person name="Mau B."/>
            <person name="Shao Y."/>
        </authorList>
    </citation>
    <scope>NUCLEOTIDE SEQUENCE [LARGE SCALE GENOMIC DNA]</scope>
    <source>
        <strain>K12 / MG1655 / ATCC 47076</strain>
    </source>
</reference>
<reference key="4">
    <citation type="journal article" date="2006" name="Mol. Syst. Biol.">
        <title>Highly accurate genome sequences of Escherichia coli K-12 strains MG1655 and W3110.</title>
        <authorList>
            <person name="Hayashi K."/>
            <person name="Morooka N."/>
            <person name="Yamamoto Y."/>
            <person name="Fujita K."/>
            <person name="Isono K."/>
            <person name="Choi S."/>
            <person name="Ohtsubo E."/>
            <person name="Baba T."/>
            <person name="Wanner B.L."/>
            <person name="Mori H."/>
            <person name="Horiuchi T."/>
        </authorList>
    </citation>
    <scope>NUCLEOTIDE SEQUENCE [LARGE SCALE GENOMIC DNA]</scope>
    <source>
        <strain>K12 / W3110 / ATCC 27325 / DSM 5911</strain>
    </source>
</reference>
<reference key="5">
    <citation type="journal article" date="1999" name="J. Bacteriol.">
        <title>Recruitment of ZipA to the septal ring of Escherichia coli is dependent on FtsZ and independent of FtsA.</title>
        <authorList>
            <person name="Hale C.A."/>
            <person name="de Boer P.A."/>
        </authorList>
    </citation>
    <scope>SUBCELLULAR LOCATION</scope>
</reference>
<reference key="6">
    <citation type="journal article" date="1999" name="Mol. Microbiol.">
        <title>Recruitment of ZipA to the division site by interaction with FtsZ.</title>
        <authorList>
            <person name="Liu Z."/>
            <person name="Mukherjee A."/>
            <person name="Lutkenhaus J."/>
        </authorList>
    </citation>
    <scope>FUNCTION</scope>
    <scope>INTERACTION WITH FTSZ</scope>
    <scope>SUBCELLULAR LOCATION</scope>
    <source>
        <strain>K12</strain>
    </source>
</reference>
<reference key="7">
    <citation type="journal article" date="2002" name="EMBO J.">
        <title>Unique and overlapping roles for ZipA and FtsA in septal ring assembly in Escherichia coli.</title>
        <authorList>
            <person name="Pichoff S."/>
            <person name="Lutkenhaus J."/>
        </authorList>
    </citation>
    <scope>FUNCTION IN Z RING ASSEMBLY</scope>
    <scope>FUNCTION IN RECRUITMENT OF FTSK</scope>
    <source>
        <strain>K12 / W3110 / ATCC 27325 / DSM 5911</strain>
    </source>
</reference>
<reference key="8">
    <citation type="journal article" date="2002" name="J. Bacteriol.">
        <title>ZipA is required for recruitment of FtsK, FtsQ, FtsL, and FtsN to the septal ring in Escherichia coli.</title>
        <authorList>
            <person name="Hale C.A."/>
            <person name="de Boer P.A.J."/>
        </authorList>
    </citation>
    <scope>FUNCTION IN RECRUITMENT OF CELL DIVISION PROTEINS</scope>
</reference>
<reference key="9">
    <citation type="journal article" date="2002" name="J. Bacteriol.">
        <title>Structural evidence that the P/Q domain of ZipA is an unstructured, flexible tether between the membrane and the C-terminal FtsZ-binding domain.</title>
        <authorList>
            <person name="Ohashi T."/>
            <person name="Hale C.A."/>
            <person name="de Boer P.A."/>
            <person name="Erickson H.P."/>
        </authorList>
    </citation>
    <scope>DOMAIN</scope>
</reference>
<reference key="10">
    <citation type="journal article" date="2005" name="J. Biol. Chem.">
        <title>Protein complexes of the Escherichia coli cell envelope.</title>
        <authorList>
            <person name="Stenberg F."/>
            <person name="Chovanec P."/>
            <person name="Maslen S.L."/>
            <person name="Robinson C.V."/>
            <person name="Ilag L."/>
            <person name="von Heijne G."/>
            <person name="Daley D.O."/>
        </authorList>
    </citation>
    <scope>SUBCELLULAR LOCATION</scope>
    <source>
        <strain>BL21-DE3</strain>
    </source>
</reference>
<reference key="11">
    <citation type="journal article" date="2009" name="Mol. Cell">
        <title>Hydroxyurea induces hydroxyl radical-mediated cell death in Escherichia coli.</title>
        <authorList>
            <person name="Davies B.W."/>
            <person name="Kohanski M.A."/>
            <person name="Simmons L.A."/>
            <person name="Winkler J.A."/>
            <person name="Collins J.J."/>
            <person name="Walker G.C."/>
        </authorList>
    </citation>
    <scope>INDUCTION BY HYDROXYUREA</scope>
    <source>
        <strain>K12 / MC4100 / ATCC 35695 / DSM 6574</strain>
    </source>
</reference>
<reference key="12">
    <citation type="journal article" date="2011" name="PLoS ONE">
        <title>ZipA binds to FtsZ with high affinity and enhances the stability of FtsZ protofilaments.</title>
        <authorList>
            <person name="Kuchibhatla A."/>
            <person name="Bhattacharya A."/>
            <person name="Panda D."/>
        </authorList>
    </citation>
    <scope>FUNCTION</scope>
    <scope>INTERACTION WITH FTSZ</scope>
</reference>
<reference key="13">
    <citation type="journal article" date="2012" name="Biochemistry">
        <title>The Escherichia coli cell division protein ZipA forms homodimers prior to association with FtsZ.</title>
        <authorList>
            <person name="Skoog K."/>
            <person name="Daley D.O."/>
        </authorList>
    </citation>
    <scope>FUNCTION</scope>
    <scope>SUBUNIT</scope>
    <source>
        <strain>K12 / MG1655 / ATCC 47076</strain>
    </source>
</reference>
<reference key="14">
    <citation type="journal article" date="2013" name="J. Biol. Chem.">
        <title>A specific role for the ZipA protein in cell division: stabilization of the FtsZ protein.</title>
        <authorList>
            <person name="Pazos M."/>
            <person name="Natale P."/>
            <person name="Vicente M."/>
        </authorList>
    </citation>
    <scope>FUNCTION</scope>
</reference>
<reference evidence="21 22" key="15">
    <citation type="journal article" date="2000" name="Biochemistry">
        <title>Solution structure of ZipA, a crucial component of Escherichia coli cell division.</title>
        <authorList>
            <person name="Moy F.J."/>
            <person name="Glasfeld E."/>
            <person name="Mosyak L."/>
            <person name="Powers R."/>
        </authorList>
    </citation>
    <scope>STRUCTURE BY NMR OF 185-328</scope>
</reference>
<reference evidence="19 20" key="16">
    <citation type="journal article" date="2000" name="EMBO J.">
        <title>The bacterial cell-division protein ZipA and its interaction with an FtsZ fragment revealed by X-ray crystallography.</title>
        <authorList>
            <person name="Mosyak L."/>
            <person name="Zhang Y."/>
            <person name="Glasfeld E."/>
            <person name="Haney S."/>
            <person name="Stahl M."/>
            <person name="Seehra J."/>
            <person name="Somers W.S."/>
        </authorList>
    </citation>
    <scope>X-RAY CRYSTALLOGRAPHY (1.50 ANGSTROMS) OF 189-328</scope>
    <scope>INTERACTION WITH FTSZ</scope>
</reference>
<reference evidence="23 24" key="17">
    <citation type="journal article" date="2004" name="Bioorg. Med. Chem. Lett.">
        <title>Design and synthesis of indolo[2,3-a]quinolizin-7-one inhibitors of the ZipA-FtsZ interaction.</title>
        <authorList>
            <person name="Jennings L.D."/>
            <person name="Foreman K.W."/>
            <person name="Rush T.S. III"/>
            <person name="Tsao D.H."/>
            <person name="Mosyak L."/>
            <person name="Li Y."/>
            <person name="Sukhdeo M.N."/>
            <person name="Ding W."/>
            <person name="Dushin E.G."/>
            <person name="Kenny C.H."/>
            <person name="Moghazeh S.L."/>
            <person name="Petersen P.J."/>
            <person name="Ruzin A.V."/>
            <person name="Tuckman M."/>
            <person name="Sutherland A.G."/>
        </authorList>
    </citation>
    <scope>X-RAY CRYSTALLOGRAPHY (2.10 ANGSTROMS) OF 185-328</scope>
</reference>
<reference evidence="25 26" key="18">
    <citation type="journal article" date="2005" name="J. Med. Chem.">
        <title>A shape-based 3-D scaffold hopping method and its application to a bacterial protein-protein interaction.</title>
        <authorList>
            <person name="Rush T.S. III"/>
            <person name="Grant J.A."/>
            <person name="Mosyak L."/>
            <person name="Nicholls A."/>
        </authorList>
    </citation>
    <scope>X-RAY CRYSTALLOGRAPHY (1.90 ANGSTROMS) OF 189-328</scope>
</reference>